<sequence length="466" mass="51588">SVGFKAGVKDYKLTYYTPEYETKDTDILAAFRVTPQPGVPPEEAGAAVAAESSTGTWTTVWTDGLTSLDRYKGRCYGIEPVPGEENQYIAYVAYPLDLFEEGSVTNMFTSIVGNVFGFKALRALRLEDLRIPTAYIKTFQGPPHGIQVERDKLNKYGRPLLGCTIKPKLGLSAKNYGRAVYECLRGGLDFTKDDENVNSQPFMRWRDRFLFCAEAIYKSQAETGEIKGHYLNATAGTCEEMMKRAIFARELGAPIVMHDYLTGGFTANTSLAHYCRDNGLLLHIHRAMHAVIDRQKNHGMHFRVLAKALRLSGGDHIHAGTVVGKLEGERDITLGFVDLLRDDFVEKDRSRGIYFTQDWVSLPGVLPVASGGIHVWHMPALTEIFGDDSVLQFGGGTLGHPWGNAPGAVANRVALEACVQARNEGRDLAREGNEIIREASKWSPELAAACEVWKAIKFEFEAVDTL</sequence>
<proteinExistence type="inferred from homology"/>
<accession>P48697</accession>
<name>RBL_CUCPE</name>
<reference key="1">
    <citation type="submission" date="1994-04" db="EMBL/GenBank/DDBJ databases">
        <authorList>
            <person name="Swensen S.M."/>
        </authorList>
    </citation>
    <scope>NUCLEOTIDE SEQUENCE [GENOMIC DNA]</scope>
</reference>
<keyword id="KW-0113">Calvin cycle</keyword>
<keyword id="KW-0120">Carbon dioxide fixation</keyword>
<keyword id="KW-0150">Chloroplast</keyword>
<keyword id="KW-1015">Disulfide bond</keyword>
<keyword id="KW-0456">Lyase</keyword>
<keyword id="KW-0460">Magnesium</keyword>
<keyword id="KW-0479">Metal-binding</keyword>
<keyword id="KW-0488">Methylation</keyword>
<keyword id="KW-0503">Monooxygenase</keyword>
<keyword id="KW-0560">Oxidoreductase</keyword>
<keyword id="KW-0601">Photorespiration</keyword>
<keyword id="KW-0602">Photosynthesis</keyword>
<keyword id="KW-0934">Plastid</keyword>
<dbReference type="EC" id="4.1.1.39" evidence="1"/>
<dbReference type="EMBL" id="L21938">
    <property type="protein sequence ID" value="AAA84184.1"/>
    <property type="molecule type" value="Genomic_DNA"/>
</dbReference>
<dbReference type="SMR" id="P48697"/>
<dbReference type="GO" id="GO:0009507">
    <property type="term" value="C:chloroplast"/>
    <property type="evidence" value="ECO:0007669"/>
    <property type="project" value="UniProtKB-SubCell"/>
</dbReference>
<dbReference type="GO" id="GO:0000287">
    <property type="term" value="F:magnesium ion binding"/>
    <property type="evidence" value="ECO:0007669"/>
    <property type="project" value="InterPro"/>
</dbReference>
<dbReference type="GO" id="GO:0004497">
    <property type="term" value="F:monooxygenase activity"/>
    <property type="evidence" value="ECO:0007669"/>
    <property type="project" value="UniProtKB-KW"/>
</dbReference>
<dbReference type="GO" id="GO:0016984">
    <property type="term" value="F:ribulose-bisphosphate carboxylase activity"/>
    <property type="evidence" value="ECO:0007669"/>
    <property type="project" value="UniProtKB-EC"/>
</dbReference>
<dbReference type="GO" id="GO:0009853">
    <property type="term" value="P:photorespiration"/>
    <property type="evidence" value="ECO:0007669"/>
    <property type="project" value="UniProtKB-KW"/>
</dbReference>
<dbReference type="GO" id="GO:0019253">
    <property type="term" value="P:reductive pentose-phosphate cycle"/>
    <property type="evidence" value="ECO:0007669"/>
    <property type="project" value="UniProtKB-KW"/>
</dbReference>
<dbReference type="CDD" id="cd08212">
    <property type="entry name" value="RuBisCO_large_I"/>
    <property type="match status" value="1"/>
</dbReference>
<dbReference type="FunFam" id="3.20.20.110:FF:000001">
    <property type="entry name" value="Ribulose bisphosphate carboxylase large chain"/>
    <property type="match status" value="1"/>
</dbReference>
<dbReference type="FunFam" id="3.30.70.150:FF:000001">
    <property type="entry name" value="Ribulose bisphosphate carboxylase large chain"/>
    <property type="match status" value="1"/>
</dbReference>
<dbReference type="Gene3D" id="3.20.20.110">
    <property type="entry name" value="Ribulose bisphosphate carboxylase, large subunit, C-terminal domain"/>
    <property type="match status" value="1"/>
</dbReference>
<dbReference type="Gene3D" id="3.30.70.150">
    <property type="entry name" value="RuBisCO large subunit, N-terminal domain"/>
    <property type="match status" value="1"/>
</dbReference>
<dbReference type="HAMAP" id="MF_01338">
    <property type="entry name" value="RuBisCO_L_type1"/>
    <property type="match status" value="1"/>
</dbReference>
<dbReference type="InterPro" id="IPR033966">
    <property type="entry name" value="RuBisCO"/>
</dbReference>
<dbReference type="InterPro" id="IPR020878">
    <property type="entry name" value="RuBisCo_large_chain_AS"/>
</dbReference>
<dbReference type="InterPro" id="IPR000685">
    <property type="entry name" value="RuBisCO_lsu_C"/>
</dbReference>
<dbReference type="InterPro" id="IPR036376">
    <property type="entry name" value="RuBisCO_lsu_C_sf"/>
</dbReference>
<dbReference type="InterPro" id="IPR017443">
    <property type="entry name" value="RuBisCO_lsu_fd_N"/>
</dbReference>
<dbReference type="InterPro" id="IPR036422">
    <property type="entry name" value="RuBisCO_lsu_N_sf"/>
</dbReference>
<dbReference type="InterPro" id="IPR020888">
    <property type="entry name" value="RuBisCO_lsuI"/>
</dbReference>
<dbReference type="NCBIfam" id="NF003252">
    <property type="entry name" value="PRK04208.1"/>
    <property type="match status" value="1"/>
</dbReference>
<dbReference type="PANTHER" id="PTHR42704">
    <property type="entry name" value="RIBULOSE BISPHOSPHATE CARBOXYLASE"/>
    <property type="match status" value="1"/>
</dbReference>
<dbReference type="PANTHER" id="PTHR42704:SF16">
    <property type="entry name" value="RIBULOSE BISPHOSPHATE CARBOXYLASE LARGE CHAIN"/>
    <property type="match status" value="1"/>
</dbReference>
<dbReference type="Pfam" id="PF00016">
    <property type="entry name" value="RuBisCO_large"/>
    <property type="match status" value="1"/>
</dbReference>
<dbReference type="Pfam" id="PF02788">
    <property type="entry name" value="RuBisCO_large_N"/>
    <property type="match status" value="1"/>
</dbReference>
<dbReference type="SFLD" id="SFLDG01052">
    <property type="entry name" value="RuBisCO"/>
    <property type="match status" value="1"/>
</dbReference>
<dbReference type="SFLD" id="SFLDS00014">
    <property type="entry name" value="RuBisCO"/>
    <property type="match status" value="1"/>
</dbReference>
<dbReference type="SFLD" id="SFLDG00301">
    <property type="entry name" value="RuBisCO-like_proteins"/>
    <property type="match status" value="1"/>
</dbReference>
<dbReference type="SUPFAM" id="SSF51649">
    <property type="entry name" value="RuBisCo, C-terminal domain"/>
    <property type="match status" value="1"/>
</dbReference>
<dbReference type="SUPFAM" id="SSF54966">
    <property type="entry name" value="RuBisCO, large subunit, small (N-terminal) domain"/>
    <property type="match status" value="1"/>
</dbReference>
<dbReference type="PROSITE" id="PS00157">
    <property type="entry name" value="RUBISCO_LARGE"/>
    <property type="match status" value="1"/>
</dbReference>
<geneLocation type="chloroplast"/>
<comment type="function">
    <text evidence="1">RuBisCO catalyzes two reactions: the carboxylation of D-ribulose 1,5-bisphosphate, the primary event in carbon dioxide fixation, as well as the oxidative fragmentation of the pentose substrate in the photorespiration process. Both reactions occur simultaneously and in competition at the same active site.</text>
</comment>
<comment type="catalytic activity">
    <reaction evidence="1">
        <text>2 (2R)-3-phosphoglycerate + 2 H(+) = D-ribulose 1,5-bisphosphate + CO2 + H2O</text>
        <dbReference type="Rhea" id="RHEA:23124"/>
        <dbReference type="ChEBI" id="CHEBI:15377"/>
        <dbReference type="ChEBI" id="CHEBI:15378"/>
        <dbReference type="ChEBI" id="CHEBI:16526"/>
        <dbReference type="ChEBI" id="CHEBI:57870"/>
        <dbReference type="ChEBI" id="CHEBI:58272"/>
        <dbReference type="EC" id="4.1.1.39"/>
    </reaction>
</comment>
<comment type="catalytic activity">
    <reaction evidence="1">
        <text>D-ribulose 1,5-bisphosphate + O2 = 2-phosphoglycolate + (2R)-3-phosphoglycerate + 2 H(+)</text>
        <dbReference type="Rhea" id="RHEA:36631"/>
        <dbReference type="ChEBI" id="CHEBI:15378"/>
        <dbReference type="ChEBI" id="CHEBI:15379"/>
        <dbReference type="ChEBI" id="CHEBI:57870"/>
        <dbReference type="ChEBI" id="CHEBI:58033"/>
        <dbReference type="ChEBI" id="CHEBI:58272"/>
    </reaction>
</comment>
<comment type="cofactor">
    <cofactor evidence="1">
        <name>Mg(2+)</name>
        <dbReference type="ChEBI" id="CHEBI:18420"/>
    </cofactor>
    <text evidence="1">Binds 1 Mg(2+) ion per subunit.</text>
</comment>
<comment type="subunit">
    <text evidence="1">Heterohexadecamer of 8 large chains and 8 small chains; disulfide-linked. The disulfide link is formed within the large subunit homodimers.</text>
</comment>
<comment type="subcellular location">
    <subcellularLocation>
        <location>Plastid</location>
        <location>Chloroplast</location>
    </subcellularLocation>
</comment>
<comment type="PTM">
    <text evidence="1">The disulfide bond which can form in the large chain dimeric partners within the hexadecamer appears to be associated with oxidative stress and protein turnover.</text>
</comment>
<comment type="miscellaneous">
    <text evidence="1">The basic functional RuBisCO is composed of a large chain homodimer in a 'head-to-tail' conformation. In form I RuBisCO this homodimer is arranged in a barrel-like tetramer with the small subunits forming a tetrameric 'cap' on each end of the 'barrel'.</text>
</comment>
<comment type="similarity">
    <text evidence="1">Belongs to the RuBisCO large chain family. Type I subfamily.</text>
</comment>
<feature type="chain" id="PRO_0000062429" description="Ribulose bisphosphate carboxylase large chain">
    <location>
        <begin position="1" status="less than"/>
        <end position="466"/>
    </location>
</feature>
<feature type="active site" description="Proton acceptor" evidence="1">
    <location>
        <position position="166"/>
    </location>
</feature>
<feature type="active site" description="Proton acceptor" evidence="1">
    <location>
        <position position="285"/>
    </location>
</feature>
<feature type="binding site" description="in homodimeric partner" evidence="1">
    <location>
        <position position="114"/>
    </location>
    <ligand>
        <name>substrate</name>
    </ligand>
</feature>
<feature type="binding site" evidence="1">
    <location>
        <position position="164"/>
    </location>
    <ligand>
        <name>substrate</name>
    </ligand>
</feature>
<feature type="binding site" evidence="1">
    <location>
        <position position="168"/>
    </location>
    <ligand>
        <name>substrate</name>
    </ligand>
</feature>
<feature type="binding site" description="via carbamate group" evidence="1">
    <location>
        <position position="192"/>
    </location>
    <ligand>
        <name>Mg(2+)</name>
        <dbReference type="ChEBI" id="CHEBI:18420"/>
    </ligand>
</feature>
<feature type="binding site" evidence="1">
    <location>
        <position position="194"/>
    </location>
    <ligand>
        <name>Mg(2+)</name>
        <dbReference type="ChEBI" id="CHEBI:18420"/>
    </ligand>
</feature>
<feature type="binding site" evidence="1">
    <location>
        <position position="195"/>
    </location>
    <ligand>
        <name>Mg(2+)</name>
        <dbReference type="ChEBI" id="CHEBI:18420"/>
    </ligand>
</feature>
<feature type="binding site" evidence="1">
    <location>
        <position position="286"/>
    </location>
    <ligand>
        <name>substrate</name>
    </ligand>
</feature>
<feature type="binding site" evidence="1">
    <location>
        <position position="318"/>
    </location>
    <ligand>
        <name>substrate</name>
    </ligand>
</feature>
<feature type="binding site" evidence="1">
    <location>
        <position position="370"/>
    </location>
    <ligand>
        <name>substrate</name>
    </ligand>
</feature>
<feature type="site" description="Transition state stabilizer" evidence="1">
    <location>
        <position position="325"/>
    </location>
</feature>
<feature type="modified residue" description="N6,N6,N6-trimethyllysine" evidence="1">
    <location>
        <position position="5"/>
    </location>
</feature>
<feature type="modified residue" description="N6-carboxylysine" evidence="1">
    <location>
        <position position="192"/>
    </location>
</feature>
<feature type="disulfide bond" description="Interchain; in linked form" evidence="1">
    <location>
        <position position="238"/>
    </location>
</feature>
<feature type="non-terminal residue">
    <location>
        <position position="1"/>
    </location>
</feature>
<organism>
    <name type="scientific">Cucurbita pepo</name>
    <name type="common">Vegetable marrow</name>
    <name type="synonym">Summer squash</name>
    <dbReference type="NCBI Taxonomy" id="3663"/>
    <lineage>
        <taxon>Eukaryota</taxon>
        <taxon>Viridiplantae</taxon>
        <taxon>Streptophyta</taxon>
        <taxon>Embryophyta</taxon>
        <taxon>Tracheophyta</taxon>
        <taxon>Spermatophyta</taxon>
        <taxon>Magnoliopsida</taxon>
        <taxon>eudicotyledons</taxon>
        <taxon>Gunneridae</taxon>
        <taxon>Pentapetalae</taxon>
        <taxon>rosids</taxon>
        <taxon>fabids</taxon>
        <taxon>Cucurbitales</taxon>
        <taxon>Cucurbitaceae</taxon>
        <taxon>Cucurbiteae</taxon>
        <taxon>Cucurbita</taxon>
    </lineage>
</organism>
<protein>
    <recommendedName>
        <fullName evidence="1">Ribulose bisphosphate carboxylase large chain</fullName>
        <shortName evidence="1">RuBisCO large subunit</shortName>
        <ecNumber evidence="1">4.1.1.39</ecNumber>
    </recommendedName>
</protein>
<gene>
    <name evidence="1" type="primary">rbcL</name>
</gene>
<evidence type="ECO:0000255" key="1">
    <source>
        <dbReference type="HAMAP-Rule" id="MF_01338"/>
    </source>
</evidence>